<accession>B8DWI3</accession>
<comment type="function">
    <text evidence="1">Catalyzes the conversion of 4-hydroxy-tetrahydrodipicolinate (HTPA) to tetrahydrodipicolinate.</text>
</comment>
<comment type="catalytic activity">
    <reaction evidence="1">
        <text>(S)-2,3,4,5-tetrahydrodipicolinate + NAD(+) + H2O = (2S,4S)-4-hydroxy-2,3,4,5-tetrahydrodipicolinate + NADH + H(+)</text>
        <dbReference type="Rhea" id="RHEA:35323"/>
        <dbReference type="ChEBI" id="CHEBI:15377"/>
        <dbReference type="ChEBI" id="CHEBI:15378"/>
        <dbReference type="ChEBI" id="CHEBI:16845"/>
        <dbReference type="ChEBI" id="CHEBI:57540"/>
        <dbReference type="ChEBI" id="CHEBI:57945"/>
        <dbReference type="ChEBI" id="CHEBI:67139"/>
        <dbReference type="EC" id="1.17.1.8"/>
    </reaction>
</comment>
<comment type="catalytic activity">
    <reaction evidence="1">
        <text>(S)-2,3,4,5-tetrahydrodipicolinate + NADP(+) + H2O = (2S,4S)-4-hydroxy-2,3,4,5-tetrahydrodipicolinate + NADPH + H(+)</text>
        <dbReference type="Rhea" id="RHEA:35331"/>
        <dbReference type="ChEBI" id="CHEBI:15377"/>
        <dbReference type="ChEBI" id="CHEBI:15378"/>
        <dbReference type="ChEBI" id="CHEBI:16845"/>
        <dbReference type="ChEBI" id="CHEBI:57783"/>
        <dbReference type="ChEBI" id="CHEBI:58349"/>
        <dbReference type="ChEBI" id="CHEBI:67139"/>
        <dbReference type="EC" id="1.17.1.8"/>
    </reaction>
</comment>
<comment type="pathway">
    <text evidence="1">Amino-acid biosynthesis; L-lysine biosynthesis via DAP pathway; (S)-tetrahydrodipicolinate from L-aspartate: step 4/4.</text>
</comment>
<comment type="subcellular location">
    <subcellularLocation>
        <location evidence="1">Cytoplasm</location>
    </subcellularLocation>
</comment>
<comment type="similarity">
    <text evidence="1">Belongs to the DapB family.</text>
</comment>
<comment type="caution">
    <text evidence="2">Was originally thought to be a dihydrodipicolinate reductase (DHDPR), catalyzing the conversion of dihydrodipicolinate to tetrahydrodipicolinate. However, it was shown in E.coli that the substrate of the enzymatic reaction is not dihydrodipicolinate (DHDP) but in fact (2S,4S)-4-hydroxy-2,3,4,5-tetrahydrodipicolinic acid (HTPA), the product released by the DapA-catalyzed reaction.</text>
</comment>
<name>DAPB_BIFA0</name>
<feature type="chain" id="PRO_1000118843" description="4-hydroxy-tetrahydrodipicolinate reductase">
    <location>
        <begin position="1"/>
        <end position="253"/>
    </location>
</feature>
<feature type="active site" description="Proton donor/acceptor" evidence="1">
    <location>
        <position position="138"/>
    </location>
</feature>
<feature type="active site" description="Proton donor" evidence="1">
    <location>
        <position position="142"/>
    </location>
</feature>
<feature type="binding site" evidence="1">
    <location>
        <begin position="8"/>
        <end position="13"/>
    </location>
    <ligand>
        <name>NAD(+)</name>
        <dbReference type="ChEBI" id="CHEBI:57540"/>
    </ligand>
</feature>
<feature type="binding site" evidence="1">
    <location>
        <position position="34"/>
    </location>
    <ligand>
        <name>NAD(+)</name>
        <dbReference type="ChEBI" id="CHEBI:57540"/>
    </ligand>
</feature>
<feature type="binding site" evidence="1">
    <location>
        <begin position="76"/>
        <end position="78"/>
    </location>
    <ligand>
        <name>NAD(+)</name>
        <dbReference type="ChEBI" id="CHEBI:57540"/>
    </ligand>
</feature>
<feature type="binding site" evidence="1">
    <location>
        <begin position="108"/>
        <end position="111"/>
    </location>
    <ligand>
        <name>NAD(+)</name>
        <dbReference type="ChEBI" id="CHEBI:57540"/>
    </ligand>
</feature>
<feature type="binding site" evidence="1">
    <location>
        <position position="139"/>
    </location>
    <ligand>
        <name>(S)-2,3,4,5-tetrahydrodipicolinate</name>
        <dbReference type="ChEBI" id="CHEBI:16845"/>
    </ligand>
</feature>
<feature type="binding site" evidence="1">
    <location>
        <begin position="148"/>
        <end position="149"/>
    </location>
    <ligand>
        <name>(S)-2,3,4,5-tetrahydrodipicolinate</name>
        <dbReference type="ChEBI" id="CHEBI:16845"/>
    </ligand>
</feature>
<keyword id="KW-0028">Amino-acid biosynthesis</keyword>
<keyword id="KW-0963">Cytoplasm</keyword>
<keyword id="KW-0220">Diaminopimelate biosynthesis</keyword>
<keyword id="KW-0457">Lysine biosynthesis</keyword>
<keyword id="KW-0520">NAD</keyword>
<keyword id="KW-0521">NADP</keyword>
<keyword id="KW-0560">Oxidoreductase</keyword>
<keyword id="KW-1185">Reference proteome</keyword>
<reference key="1">
    <citation type="journal article" date="2009" name="J. Bacteriol.">
        <title>Genome sequence of the probiotic bacterium Bifidobacterium animalis subsp. lactis AD011.</title>
        <authorList>
            <person name="Kim J.F."/>
            <person name="Jeong H."/>
            <person name="Yu D.S."/>
            <person name="Choi S.-H."/>
            <person name="Hur C.-G."/>
            <person name="Park M.-S."/>
            <person name="Yoon S.H."/>
            <person name="Kim D.-W."/>
            <person name="Ji G.E."/>
            <person name="Park H.-S."/>
            <person name="Oh T.K."/>
        </authorList>
    </citation>
    <scope>NUCLEOTIDE SEQUENCE [LARGE SCALE GENOMIC DNA]</scope>
    <source>
        <strain>AD011</strain>
    </source>
</reference>
<gene>
    <name evidence="1" type="primary">dapB</name>
    <name type="ordered locus">BLA_0535</name>
</gene>
<dbReference type="EC" id="1.17.1.8" evidence="1"/>
<dbReference type="EMBL" id="CP001213">
    <property type="protein sequence ID" value="ACL28834.1"/>
    <property type="molecule type" value="Genomic_DNA"/>
</dbReference>
<dbReference type="RefSeq" id="WP_004218250.1">
    <property type="nucleotide sequence ID" value="NC_011835.1"/>
</dbReference>
<dbReference type="SMR" id="B8DWI3"/>
<dbReference type="STRING" id="442563.BLA_0535"/>
<dbReference type="GeneID" id="29696660"/>
<dbReference type="KEGG" id="bla:BLA_0535"/>
<dbReference type="PATRIC" id="fig|442563.4.peg.564"/>
<dbReference type="HOGENOM" id="CLU_047479_0_1_11"/>
<dbReference type="UniPathway" id="UPA00034">
    <property type="reaction ID" value="UER00018"/>
</dbReference>
<dbReference type="Proteomes" id="UP000002456">
    <property type="component" value="Chromosome"/>
</dbReference>
<dbReference type="GO" id="GO:0005829">
    <property type="term" value="C:cytosol"/>
    <property type="evidence" value="ECO:0007669"/>
    <property type="project" value="TreeGrafter"/>
</dbReference>
<dbReference type="GO" id="GO:0008839">
    <property type="term" value="F:4-hydroxy-tetrahydrodipicolinate reductase"/>
    <property type="evidence" value="ECO:0007669"/>
    <property type="project" value="UniProtKB-EC"/>
</dbReference>
<dbReference type="GO" id="GO:0051287">
    <property type="term" value="F:NAD binding"/>
    <property type="evidence" value="ECO:0007669"/>
    <property type="project" value="UniProtKB-UniRule"/>
</dbReference>
<dbReference type="GO" id="GO:0050661">
    <property type="term" value="F:NADP binding"/>
    <property type="evidence" value="ECO:0007669"/>
    <property type="project" value="UniProtKB-UniRule"/>
</dbReference>
<dbReference type="GO" id="GO:0016726">
    <property type="term" value="F:oxidoreductase activity, acting on CH or CH2 groups, NAD or NADP as acceptor"/>
    <property type="evidence" value="ECO:0007669"/>
    <property type="project" value="UniProtKB-UniRule"/>
</dbReference>
<dbReference type="GO" id="GO:0019877">
    <property type="term" value="P:diaminopimelate biosynthetic process"/>
    <property type="evidence" value="ECO:0007669"/>
    <property type="project" value="UniProtKB-UniRule"/>
</dbReference>
<dbReference type="GO" id="GO:0009089">
    <property type="term" value="P:lysine biosynthetic process via diaminopimelate"/>
    <property type="evidence" value="ECO:0007669"/>
    <property type="project" value="UniProtKB-UniRule"/>
</dbReference>
<dbReference type="CDD" id="cd02274">
    <property type="entry name" value="DHDPR_N"/>
    <property type="match status" value="1"/>
</dbReference>
<dbReference type="FunFam" id="3.30.360.10:FF:000009">
    <property type="entry name" value="4-hydroxy-tetrahydrodipicolinate reductase"/>
    <property type="match status" value="1"/>
</dbReference>
<dbReference type="Gene3D" id="3.30.360.10">
    <property type="entry name" value="Dihydrodipicolinate Reductase, domain 2"/>
    <property type="match status" value="1"/>
</dbReference>
<dbReference type="Gene3D" id="3.40.50.720">
    <property type="entry name" value="NAD(P)-binding Rossmann-like Domain"/>
    <property type="match status" value="1"/>
</dbReference>
<dbReference type="HAMAP" id="MF_00102">
    <property type="entry name" value="DapB"/>
    <property type="match status" value="1"/>
</dbReference>
<dbReference type="InterPro" id="IPR022663">
    <property type="entry name" value="DapB_C"/>
</dbReference>
<dbReference type="InterPro" id="IPR000846">
    <property type="entry name" value="DapB_N"/>
</dbReference>
<dbReference type="InterPro" id="IPR022664">
    <property type="entry name" value="DapB_N_CS"/>
</dbReference>
<dbReference type="InterPro" id="IPR023940">
    <property type="entry name" value="DHDPR_bac"/>
</dbReference>
<dbReference type="InterPro" id="IPR036291">
    <property type="entry name" value="NAD(P)-bd_dom_sf"/>
</dbReference>
<dbReference type="NCBIfam" id="TIGR00036">
    <property type="entry name" value="dapB"/>
    <property type="match status" value="1"/>
</dbReference>
<dbReference type="PANTHER" id="PTHR20836:SF0">
    <property type="entry name" value="4-HYDROXY-TETRAHYDRODIPICOLINATE REDUCTASE 1, CHLOROPLASTIC-RELATED"/>
    <property type="match status" value="1"/>
</dbReference>
<dbReference type="PANTHER" id="PTHR20836">
    <property type="entry name" value="DIHYDRODIPICOLINATE REDUCTASE"/>
    <property type="match status" value="1"/>
</dbReference>
<dbReference type="Pfam" id="PF05173">
    <property type="entry name" value="DapB_C"/>
    <property type="match status" value="1"/>
</dbReference>
<dbReference type="Pfam" id="PF01113">
    <property type="entry name" value="DapB_N"/>
    <property type="match status" value="1"/>
</dbReference>
<dbReference type="PIRSF" id="PIRSF000161">
    <property type="entry name" value="DHPR"/>
    <property type="match status" value="1"/>
</dbReference>
<dbReference type="SUPFAM" id="SSF55347">
    <property type="entry name" value="Glyceraldehyde-3-phosphate dehydrogenase-like, C-terminal domain"/>
    <property type="match status" value="1"/>
</dbReference>
<dbReference type="SUPFAM" id="SSF51735">
    <property type="entry name" value="NAD(P)-binding Rossmann-fold domains"/>
    <property type="match status" value="1"/>
</dbReference>
<dbReference type="PROSITE" id="PS01298">
    <property type="entry name" value="DAPB"/>
    <property type="match status" value="1"/>
</dbReference>
<sequence length="253" mass="26772">MIRVSVVGAKGRMGSHVVEAVRAADDTELALALDAGDDLTQITPQNTDVVVEFTVPAVSLNNVLTLVRQGVNVVVGTTGWTDEKLDQVRAALAETETIDGRKQSVFIAPNFAISAVLADVFARIAAPYFESAEVIELHHPDKVDAPSGTAIHTAHAIADARKAAGLGEMPDNTQTDDGSRGAVIDGVHVHAVRLRGLNAHEEVLLGNAGEQLVIRADSFDRISFMPGVLLAVRKVDSGEFPGLTVGLDQFLDL</sequence>
<evidence type="ECO:0000255" key="1">
    <source>
        <dbReference type="HAMAP-Rule" id="MF_00102"/>
    </source>
</evidence>
<evidence type="ECO:0000305" key="2"/>
<organism>
    <name type="scientific">Bifidobacterium animalis subsp. lactis (strain AD011)</name>
    <dbReference type="NCBI Taxonomy" id="442563"/>
    <lineage>
        <taxon>Bacteria</taxon>
        <taxon>Bacillati</taxon>
        <taxon>Actinomycetota</taxon>
        <taxon>Actinomycetes</taxon>
        <taxon>Bifidobacteriales</taxon>
        <taxon>Bifidobacteriaceae</taxon>
        <taxon>Bifidobacterium</taxon>
    </lineage>
</organism>
<proteinExistence type="inferred from homology"/>
<protein>
    <recommendedName>
        <fullName evidence="1">4-hydroxy-tetrahydrodipicolinate reductase</fullName>
        <shortName evidence="1">HTPA reductase</shortName>
        <ecNumber evidence="1">1.17.1.8</ecNumber>
    </recommendedName>
</protein>